<feature type="chain" id="PRO_1000081558" description="Small ribosomal subunit protein uS10">
    <location>
        <begin position="1"/>
        <end position="102"/>
    </location>
</feature>
<proteinExistence type="inferred from homology"/>
<dbReference type="EMBL" id="AP009389">
    <property type="protein sequence ID" value="BAF58500.1"/>
    <property type="molecule type" value="Genomic_DNA"/>
</dbReference>
<dbReference type="SMR" id="A5D5I9"/>
<dbReference type="STRING" id="370438.PTH_0319"/>
<dbReference type="KEGG" id="pth:PTH_0319"/>
<dbReference type="eggNOG" id="COG0051">
    <property type="taxonomic scope" value="Bacteria"/>
</dbReference>
<dbReference type="HOGENOM" id="CLU_122625_1_3_9"/>
<dbReference type="Proteomes" id="UP000006556">
    <property type="component" value="Chromosome"/>
</dbReference>
<dbReference type="GO" id="GO:1990904">
    <property type="term" value="C:ribonucleoprotein complex"/>
    <property type="evidence" value="ECO:0007669"/>
    <property type="project" value="UniProtKB-KW"/>
</dbReference>
<dbReference type="GO" id="GO:0005840">
    <property type="term" value="C:ribosome"/>
    <property type="evidence" value="ECO:0007669"/>
    <property type="project" value="UniProtKB-KW"/>
</dbReference>
<dbReference type="GO" id="GO:0003735">
    <property type="term" value="F:structural constituent of ribosome"/>
    <property type="evidence" value="ECO:0007669"/>
    <property type="project" value="InterPro"/>
</dbReference>
<dbReference type="GO" id="GO:0000049">
    <property type="term" value="F:tRNA binding"/>
    <property type="evidence" value="ECO:0007669"/>
    <property type="project" value="UniProtKB-UniRule"/>
</dbReference>
<dbReference type="GO" id="GO:0006412">
    <property type="term" value="P:translation"/>
    <property type="evidence" value="ECO:0007669"/>
    <property type="project" value="UniProtKB-UniRule"/>
</dbReference>
<dbReference type="FunFam" id="3.30.70.600:FF:000001">
    <property type="entry name" value="30S ribosomal protein S10"/>
    <property type="match status" value="1"/>
</dbReference>
<dbReference type="Gene3D" id="3.30.70.600">
    <property type="entry name" value="Ribosomal protein S10 domain"/>
    <property type="match status" value="1"/>
</dbReference>
<dbReference type="HAMAP" id="MF_00508">
    <property type="entry name" value="Ribosomal_uS10"/>
    <property type="match status" value="1"/>
</dbReference>
<dbReference type="InterPro" id="IPR001848">
    <property type="entry name" value="Ribosomal_uS10"/>
</dbReference>
<dbReference type="InterPro" id="IPR018268">
    <property type="entry name" value="Ribosomal_uS10_CS"/>
</dbReference>
<dbReference type="InterPro" id="IPR027486">
    <property type="entry name" value="Ribosomal_uS10_dom"/>
</dbReference>
<dbReference type="InterPro" id="IPR036838">
    <property type="entry name" value="Ribosomal_uS10_dom_sf"/>
</dbReference>
<dbReference type="NCBIfam" id="NF001861">
    <property type="entry name" value="PRK00596.1"/>
    <property type="match status" value="1"/>
</dbReference>
<dbReference type="NCBIfam" id="TIGR01049">
    <property type="entry name" value="rpsJ_bact"/>
    <property type="match status" value="1"/>
</dbReference>
<dbReference type="PANTHER" id="PTHR11700">
    <property type="entry name" value="30S RIBOSOMAL PROTEIN S10 FAMILY MEMBER"/>
    <property type="match status" value="1"/>
</dbReference>
<dbReference type="Pfam" id="PF00338">
    <property type="entry name" value="Ribosomal_S10"/>
    <property type="match status" value="1"/>
</dbReference>
<dbReference type="PRINTS" id="PR00971">
    <property type="entry name" value="RIBOSOMALS10"/>
</dbReference>
<dbReference type="SMART" id="SM01403">
    <property type="entry name" value="Ribosomal_S10"/>
    <property type="match status" value="1"/>
</dbReference>
<dbReference type="SUPFAM" id="SSF54999">
    <property type="entry name" value="Ribosomal protein S10"/>
    <property type="match status" value="1"/>
</dbReference>
<dbReference type="PROSITE" id="PS00361">
    <property type="entry name" value="RIBOSOMAL_S10"/>
    <property type="match status" value="1"/>
</dbReference>
<evidence type="ECO:0000255" key="1">
    <source>
        <dbReference type="HAMAP-Rule" id="MF_00508"/>
    </source>
</evidence>
<evidence type="ECO:0000305" key="2"/>
<gene>
    <name evidence="1" type="primary">rpsJ</name>
    <name type="ordered locus">PTH_0319</name>
</gene>
<keyword id="KW-1185">Reference proteome</keyword>
<keyword id="KW-0687">Ribonucleoprotein</keyword>
<keyword id="KW-0689">Ribosomal protein</keyword>
<reference key="1">
    <citation type="journal article" date="2008" name="Genome Res.">
        <title>The genome of Pelotomaculum thermopropionicum reveals niche-associated evolution in anaerobic microbiota.</title>
        <authorList>
            <person name="Kosaka T."/>
            <person name="Kato S."/>
            <person name="Shimoyama T."/>
            <person name="Ishii S."/>
            <person name="Abe T."/>
            <person name="Watanabe K."/>
        </authorList>
    </citation>
    <scope>NUCLEOTIDE SEQUENCE [LARGE SCALE GENOMIC DNA]</scope>
    <source>
        <strain>DSM 13744 / JCM 10971 / SI</strain>
    </source>
</reference>
<name>RS10_PELTS</name>
<protein>
    <recommendedName>
        <fullName evidence="1">Small ribosomal subunit protein uS10</fullName>
    </recommendedName>
    <alternativeName>
        <fullName evidence="2">30S ribosomal protein S10</fullName>
    </alternativeName>
</protein>
<comment type="function">
    <text evidence="1">Involved in the binding of tRNA to the ribosomes.</text>
</comment>
<comment type="subunit">
    <text evidence="1">Part of the 30S ribosomal subunit.</text>
</comment>
<comment type="similarity">
    <text evidence="1">Belongs to the universal ribosomal protein uS10 family.</text>
</comment>
<organism>
    <name type="scientific">Pelotomaculum thermopropionicum (strain DSM 13744 / JCM 10971 / SI)</name>
    <dbReference type="NCBI Taxonomy" id="370438"/>
    <lineage>
        <taxon>Bacteria</taxon>
        <taxon>Bacillati</taxon>
        <taxon>Bacillota</taxon>
        <taxon>Clostridia</taxon>
        <taxon>Eubacteriales</taxon>
        <taxon>Desulfotomaculaceae</taxon>
        <taxon>Pelotomaculum</taxon>
    </lineage>
</organism>
<accession>A5D5I9</accession>
<sequence>MKSQKIRIRLKAFDHHMLDQSAQKIVETARRTGASVAGPVPLPTEKSIYTILRSPHVNKDSREQFEMRTHKRLIDILEPNPKTVDALMRLDLPAGVDIEIKL</sequence>